<feature type="chain" id="PRO_0000311138" description="Polymerase acidic protein">
    <location>
        <begin position="1"/>
        <end position="716"/>
    </location>
</feature>
<feature type="short sequence motif" description="Nuclear localization signal 1 (NLS1)" evidence="1 2">
    <location>
        <begin position="124"/>
        <end position="139"/>
    </location>
</feature>
<feature type="short sequence motif" description="Nuclear localization signal 2 (NLS2)" evidence="1 2">
    <location>
        <begin position="184"/>
        <end position="247"/>
    </location>
</feature>
<feature type="binding site" evidence="2">
    <location>
        <position position="41"/>
    </location>
    <ligand>
        <name>Mn(2+)</name>
        <dbReference type="ChEBI" id="CHEBI:29035"/>
        <label>1</label>
    </ligand>
</feature>
<feature type="binding site" evidence="2">
    <location>
        <position position="80"/>
    </location>
    <ligand>
        <name>Mn(2+)</name>
        <dbReference type="ChEBI" id="CHEBI:29035"/>
        <label>2</label>
    </ligand>
</feature>
<feature type="binding site" evidence="2">
    <location>
        <position position="108"/>
    </location>
    <ligand>
        <name>Mn(2+)</name>
        <dbReference type="ChEBI" id="CHEBI:29035"/>
        <label>1</label>
    </ligand>
</feature>
<feature type="binding site" evidence="2">
    <location>
        <position position="108"/>
    </location>
    <ligand>
        <name>Mn(2+)</name>
        <dbReference type="ChEBI" id="CHEBI:29035"/>
        <label>2</label>
    </ligand>
</feature>
<feature type="binding site" evidence="2">
    <location>
        <position position="119"/>
    </location>
    <ligand>
        <name>Mn(2+)</name>
        <dbReference type="ChEBI" id="CHEBI:29035"/>
        <label>1</label>
    </ligand>
</feature>
<feature type="binding site" evidence="2">
    <location>
        <position position="120"/>
    </location>
    <ligand>
        <name>Mn(2+)</name>
        <dbReference type="ChEBI" id="CHEBI:29035"/>
        <label>1</label>
    </ligand>
</feature>
<organism>
    <name type="scientific">Influenza A virus (strain A/Chicken/Hong Kong/YU22/2002 H5N1 genotype Z)</name>
    <dbReference type="NCBI Taxonomy" id="284177"/>
    <lineage>
        <taxon>Viruses</taxon>
        <taxon>Riboviria</taxon>
        <taxon>Orthornavirae</taxon>
        <taxon>Negarnaviricota</taxon>
        <taxon>Polyploviricotina</taxon>
        <taxon>Insthoviricetes</taxon>
        <taxon>Articulavirales</taxon>
        <taxon>Orthomyxoviridae</taxon>
        <taxon>Alphainfluenzavirus</taxon>
        <taxon>Alphainfluenzavirus influenzae</taxon>
        <taxon>Influenza A virus</taxon>
    </lineage>
</organism>
<accession>Q6DNX6</accession>
<comment type="function">
    <text evidence="2">Plays an essential role in viral RNA transcription and replication by forming the heterotrimeric polymerase complex together with PB1 and PB2 subunits. The complex transcribes viral mRNAs by using a unique mechanism called cap-snatching. It consists in the hijacking and cleavage of host capped pre-mRNAs. These short capped RNAs are then used as primers for viral mRNAs. The PB2 subunit is responsible for the binding of the 5' cap of cellular pre-mRNAs which are subsequently cleaved after 10-13 nucleotides by the PA subunit that carries the endonuclease activity.</text>
</comment>
<comment type="cofactor">
    <cofactor evidence="2">
        <name>Mn(2+)</name>
        <dbReference type="ChEBI" id="CHEBI:29035"/>
    </cofactor>
    <text evidence="2">Binds 2 manganese ions per subunit.</text>
</comment>
<comment type="subunit">
    <text evidence="1 2">Influenza RNA polymerase is composed of three subunits: PB1, PB2 and PA. Interacts (via C-terminus) with PB1 (via N-terminus).</text>
</comment>
<comment type="subcellular location">
    <subcellularLocation>
        <location evidence="2">Host cytoplasm</location>
    </subcellularLocation>
    <subcellularLocation>
        <location evidence="2">Host nucleus</location>
    </subcellularLocation>
    <text evidence="1 2">PB1 and PA are transported in the host nucleus as a complex.</text>
</comment>
<comment type="alternative products">
    <event type="ribosomal frameshifting"/>
    <isoform>
        <id>Q6DNX6-1</id>
        <name>PA</name>
        <sequence type="displayed"/>
    </isoform>
    <isoform>
        <id>P0CK74-1</id>
        <name>PA-X</name>
        <sequence type="external"/>
    </isoform>
</comment>
<comment type="PTM">
    <text evidence="1 2">Phosphorylated on serines and threonines by host kinases, including human casein kinase II.</text>
</comment>
<comment type="similarity">
    <text evidence="2">Belongs to the influenza viruses PA family.</text>
</comment>
<gene>
    <name evidence="2" type="primary">PA</name>
</gene>
<keyword id="KW-1157">Cap snatching</keyword>
<keyword id="KW-0255">Endonuclease</keyword>
<keyword id="KW-1262">Eukaryotic host gene expression shutoff by virus</keyword>
<keyword id="KW-1191">Eukaryotic host transcription shutoff by virus</keyword>
<keyword id="KW-1035">Host cytoplasm</keyword>
<keyword id="KW-1190">Host gene expression shutoff by virus</keyword>
<keyword id="KW-1048">Host nucleus</keyword>
<keyword id="KW-0945">Host-virus interaction</keyword>
<keyword id="KW-0378">Hydrolase</keyword>
<keyword id="KW-1104">Inhibition of host RNA polymerase II by virus</keyword>
<keyword id="KW-0464">Manganese</keyword>
<keyword id="KW-0479">Metal-binding</keyword>
<keyword id="KW-0540">Nuclease</keyword>
<keyword id="KW-0597">Phosphoprotein</keyword>
<keyword id="KW-0688">Ribosomal frameshifting</keyword>
<organismHost>
    <name type="scientific">Aves</name>
    <dbReference type="NCBI Taxonomy" id="8782"/>
</organismHost>
<organismHost>
    <name type="scientific">Felis catus</name>
    <name type="common">Cat</name>
    <name type="synonym">Felis silvestris catus</name>
    <dbReference type="NCBI Taxonomy" id="9685"/>
</organismHost>
<organismHost>
    <name type="scientific">Homo sapiens</name>
    <name type="common">Human</name>
    <dbReference type="NCBI Taxonomy" id="9606"/>
</organismHost>
<organismHost>
    <name type="scientific">Panthera pardus</name>
    <name type="common">Leopard</name>
    <name type="synonym">Felis pardus</name>
    <dbReference type="NCBI Taxonomy" id="9691"/>
</organismHost>
<organismHost>
    <name type="scientific">Panthera tigris</name>
    <name type="common">Tiger</name>
    <dbReference type="NCBI Taxonomy" id="9694"/>
</organismHost>
<organismHost>
    <name type="scientific">Sus scrofa</name>
    <name type="common">Pig</name>
    <dbReference type="NCBI Taxonomy" id="9823"/>
</organismHost>
<sequence length="716" mass="82428">MEDFVRQCFNPMIVELAEKAMKEYGEDPKIETNKFAAICTHLEVCFMYSDFHFIDERSESIIVESGDPNALLKHRFEIIEGRDRTMAWTVVNSICNTTGVEKPKFIPDLYDYKENRFIEIGVTRREVHTYYLEKANKIKSEKTHIHIFSFTGEEMATKADYTLDEESRARIKTRLFTIRQEMASRGLWDSFRQSERGEETIEEKFEITGTMRRLADQSLPPNFSSLENFRAYVDGFEPNGCIEGKLSQMSKEVNARIEPFLKTTPRPLRLPDGPPCSQRSKFLLMDALKLSIEDPSHEGEGIPLYDAIKCMKTFFGWKEPNIVKPHEKGINPNYLLAWKQVLAELQDIENEEKIPKTKNMKKTGQLKWALGENMAPEKVDFEDCKDVSDLRQYDSDEPESRSLASWIQSEFNKACELTDSSWIELDEIGEDVAPIEHIASMRRNYFTAEVSHCRATEYIMKGVYINTALLNASCAAMDDFQLIPMISKCRTKEGRRKTNLYGFIIKGRSHLRNDTDVVNFVSMEFSLTDPRLEPHKWEKYCVLEIGDMLLRTAVGQVSRPMFLYVRTNGTSKIKMKWGMEMRRCLLQSLQQIESMIEAESSVKEKDMTKEFFENKSETWPIGESPKGVEEGSIGKVCRTLLAKSVFNSLYASPQLEGFSAESRKLLLIAQALRDNLEPGTFDLGGLYEAIEECLINDPWVLLNASWFNSFLAHALK</sequence>
<name>PA_I02A6</name>
<evidence type="ECO:0000250" key="1">
    <source>
        <dbReference type="UniProtKB" id="P03433"/>
    </source>
</evidence>
<evidence type="ECO:0000255" key="2">
    <source>
        <dbReference type="HAMAP-Rule" id="MF_04063"/>
    </source>
</evidence>
<proteinExistence type="inferred from homology"/>
<dbReference type="EC" id="3.1.-.-" evidence="2"/>
<dbReference type="EMBL" id="AY651626">
    <property type="protein sequence ID" value="AAT74502.2"/>
    <property type="molecule type" value="Genomic_RNA"/>
</dbReference>
<dbReference type="SMR" id="Q6DNX6"/>
<dbReference type="GO" id="GO:0030430">
    <property type="term" value="C:host cell cytoplasm"/>
    <property type="evidence" value="ECO:0007669"/>
    <property type="project" value="UniProtKB-SubCell"/>
</dbReference>
<dbReference type="GO" id="GO:0042025">
    <property type="term" value="C:host cell nucleus"/>
    <property type="evidence" value="ECO:0007669"/>
    <property type="project" value="UniProtKB-SubCell"/>
</dbReference>
<dbReference type="GO" id="GO:0004519">
    <property type="term" value="F:endonuclease activity"/>
    <property type="evidence" value="ECO:0007669"/>
    <property type="project" value="UniProtKB-KW"/>
</dbReference>
<dbReference type="GO" id="GO:0046872">
    <property type="term" value="F:metal ion binding"/>
    <property type="evidence" value="ECO:0007669"/>
    <property type="project" value="UniProtKB-KW"/>
</dbReference>
<dbReference type="GO" id="GO:0003723">
    <property type="term" value="F:RNA binding"/>
    <property type="evidence" value="ECO:0007669"/>
    <property type="project" value="UniProtKB-UniRule"/>
</dbReference>
<dbReference type="GO" id="GO:0075526">
    <property type="term" value="P:cap snatching"/>
    <property type="evidence" value="ECO:0007669"/>
    <property type="project" value="UniProtKB-UniRule"/>
</dbReference>
<dbReference type="GO" id="GO:0006351">
    <property type="term" value="P:DNA-templated transcription"/>
    <property type="evidence" value="ECO:0007669"/>
    <property type="project" value="UniProtKB-UniRule"/>
</dbReference>
<dbReference type="GO" id="GO:0039657">
    <property type="term" value="P:symbiont-mediated suppression of host gene expression"/>
    <property type="evidence" value="ECO:0007669"/>
    <property type="project" value="UniProtKB-KW"/>
</dbReference>
<dbReference type="GO" id="GO:0039523">
    <property type="term" value="P:symbiont-mediated suppression of host mRNA transcription via inhibition of RNA polymerase II activity"/>
    <property type="evidence" value="ECO:0007669"/>
    <property type="project" value="UniProtKB-UniRule"/>
</dbReference>
<dbReference type="GO" id="GO:0039694">
    <property type="term" value="P:viral RNA genome replication"/>
    <property type="evidence" value="ECO:0007669"/>
    <property type="project" value="InterPro"/>
</dbReference>
<dbReference type="GO" id="GO:0075523">
    <property type="term" value="P:viral translational frameshifting"/>
    <property type="evidence" value="ECO:0007669"/>
    <property type="project" value="UniProtKB-KW"/>
</dbReference>
<dbReference type="FunFam" id="3.40.91.90:FF:000001">
    <property type="entry name" value="Polymerase acidic protein"/>
    <property type="match status" value="1"/>
</dbReference>
<dbReference type="Gene3D" id="3.40.91.90">
    <property type="entry name" value="Influenza RNA-dependent RNA polymerase subunit PA, endonuclease domain"/>
    <property type="match status" value="1"/>
</dbReference>
<dbReference type="HAMAP" id="MF_04063">
    <property type="entry name" value="INFV_PA"/>
    <property type="match status" value="1"/>
</dbReference>
<dbReference type="InterPro" id="IPR037534">
    <property type="entry name" value="INFV_PA"/>
</dbReference>
<dbReference type="InterPro" id="IPR001009">
    <property type="entry name" value="PA/PA-X"/>
</dbReference>
<dbReference type="InterPro" id="IPR038372">
    <property type="entry name" value="PA/PA-X_sf"/>
</dbReference>
<dbReference type="Pfam" id="PF00603">
    <property type="entry name" value="Flu_PA"/>
    <property type="match status" value="1"/>
</dbReference>
<reference key="1">
    <citation type="journal article" date="2004" name="Nature">
        <title>Genesis of a highly pathogenic and potentially pandemic H5N1 influenza virus in eastern Asia.</title>
        <authorList>
            <person name="Li K.S."/>
            <person name="Guan Y."/>
            <person name="Wang J."/>
            <person name="Smith G.J.D."/>
            <person name="Xu K.M."/>
            <person name="Duan L."/>
            <person name="Rahardjo A.P."/>
            <person name="Puthavathana P."/>
            <person name="Buranathai C."/>
            <person name="Nguyen T.D."/>
            <person name="Estoepangestie A.T.S."/>
            <person name="Chaisingh A."/>
            <person name="Auewarakul P."/>
            <person name="Long H.T."/>
            <person name="Hanh N.T.H."/>
            <person name="Webby R.J."/>
            <person name="Poon L.L.M."/>
            <person name="Chen H."/>
            <person name="Shortridge K.F."/>
            <person name="Yuen K.Y."/>
            <person name="Webster R.G."/>
            <person name="Peiris J.S.M."/>
        </authorList>
    </citation>
    <scope>NUCLEOTIDE SEQUENCE [GENOMIC RNA]</scope>
</reference>
<reference key="2">
    <citation type="submission" date="2008-03" db="EMBL/GenBank/DDBJ databases">
        <authorList>
            <person name="Li K.S."/>
            <person name="Guan Y."/>
            <person name="Wang J."/>
            <person name="Smith G.J.D."/>
            <person name="Xu K.M."/>
            <person name="Duan L."/>
            <person name="Rahardjo A.P."/>
            <person name="Puthavathana P."/>
            <person name="Buranathai C."/>
            <person name="Nguyen T.D."/>
            <person name="Estoepangestie A.T.S."/>
            <person name="Chaisingh A."/>
            <person name="Auewarakul P."/>
            <person name="Long H.T."/>
            <person name="Hanh N.T.H."/>
            <person name="Lim W."/>
            <person name="Webby R.J."/>
            <person name="Poon L.L.M."/>
            <person name="Chen H."/>
            <person name="Shortridge K.F."/>
            <person name="Yuen K.Y."/>
            <person name="Webster R.G."/>
            <person name="Peiris J.S.M."/>
        </authorList>
    </citation>
    <scope>SEQUENCE REVISION</scope>
</reference>
<protein>
    <recommendedName>
        <fullName evidence="2">Polymerase acidic protein</fullName>
        <ecNumber evidence="2">3.1.-.-</ecNumber>
    </recommendedName>
    <alternativeName>
        <fullName evidence="2">RNA-directed RNA polymerase subunit P2</fullName>
    </alternativeName>
</protein>